<reference key="1">
    <citation type="journal article" date="1995" name="Science">
        <title>The minimal gene complement of Mycoplasma genitalium.</title>
        <authorList>
            <person name="Fraser C.M."/>
            <person name="Gocayne J.D."/>
            <person name="White O."/>
            <person name="Adams M.D."/>
            <person name="Clayton R.A."/>
            <person name="Fleischmann R.D."/>
            <person name="Bult C.J."/>
            <person name="Kerlavage A.R."/>
            <person name="Sutton G.G."/>
            <person name="Kelley J.M."/>
            <person name="Fritchman J.L."/>
            <person name="Weidman J.F."/>
            <person name="Small K.V."/>
            <person name="Sandusky M."/>
            <person name="Fuhrmann J.L."/>
            <person name="Nguyen D.T."/>
            <person name="Utterback T.R."/>
            <person name="Saudek D.M."/>
            <person name="Phillips C.A."/>
            <person name="Merrick J.M."/>
            <person name="Tomb J.-F."/>
            <person name="Dougherty B.A."/>
            <person name="Bott K.F."/>
            <person name="Hu P.-C."/>
            <person name="Lucier T.S."/>
            <person name="Peterson S.N."/>
            <person name="Smith H.O."/>
            <person name="Hutchison C.A. III"/>
            <person name="Venter J.C."/>
        </authorList>
    </citation>
    <scope>NUCLEOTIDE SEQUENCE [LARGE SCALE GENOMIC DNA]</scope>
    <source>
        <strain>ATCC 33530 / DSM 19775 / NCTC 10195 / G37</strain>
    </source>
</reference>
<reference key="2">
    <citation type="journal article" date="1993" name="J. Bacteriol.">
        <title>A survey of the Mycoplasma genitalium genome by using random sequencing.</title>
        <authorList>
            <person name="Peterson S.N."/>
            <person name="Hu P.-C."/>
            <person name="Bott K.F."/>
            <person name="Hutchison C.A. III"/>
        </authorList>
    </citation>
    <scope>NUCLEOTIDE SEQUENCE [GENOMIC DNA] OF 40-152</scope>
    <source>
        <strain>ATCC 33530 / DSM 19775 / NCTC 10195 / G37</strain>
    </source>
</reference>
<reference key="3">
    <citation type="journal article" date="1991" name="Nucleic Acids Res.">
        <title>A random sequencing approach for placing markers on the physical map of Mycoplasma genitalium.</title>
        <authorList>
            <person name="Peterson S.N."/>
            <person name="Schramm N."/>
            <person name="Hu P.-C."/>
            <person name="Bott K.F."/>
            <person name="Hutchison C.A. III"/>
        </authorList>
    </citation>
    <scope>NUCLEOTIDE SEQUENCE [GENOMIC DNA] OF 255-326</scope>
    <source>
        <strain>ATCC 33530 / DSM 19775 / NCTC 10195 / G37</strain>
    </source>
</reference>
<dbReference type="EMBL" id="L43967">
    <property type="protein sequence ID" value="AAC71623.1"/>
    <property type="molecule type" value="Genomic_DNA"/>
</dbReference>
<dbReference type="EMBL" id="U02260">
    <property type="protein sequence ID" value="AAD12525.1"/>
    <property type="molecule type" value="Genomic_DNA"/>
</dbReference>
<dbReference type="EMBL" id="X61530">
    <property type="protein sequence ID" value="CAA43742.1"/>
    <property type="molecule type" value="Genomic_DNA"/>
</dbReference>
<dbReference type="PIR" id="G64243">
    <property type="entry name" value="G64243"/>
</dbReference>
<dbReference type="RefSeq" id="WP_010869465.1">
    <property type="nucleotide sequence ID" value="NC_000908.2"/>
</dbReference>
<dbReference type="STRING" id="243273.MG_395"/>
<dbReference type="GeneID" id="88282580"/>
<dbReference type="KEGG" id="mge:MG_395"/>
<dbReference type="eggNOG" id="ENOG5030N1R">
    <property type="taxonomic scope" value="Bacteria"/>
</dbReference>
<dbReference type="HOGENOM" id="CLU_038569_1_0_14"/>
<dbReference type="InParanoid" id="P47635"/>
<dbReference type="OrthoDB" id="398874at2"/>
<dbReference type="BioCyc" id="MGEN243273:G1GJ2-491-MONOMER"/>
<dbReference type="Proteomes" id="UP000000807">
    <property type="component" value="Chromosome"/>
</dbReference>
<dbReference type="GO" id="GO:0005886">
    <property type="term" value="C:plasma membrane"/>
    <property type="evidence" value="ECO:0007669"/>
    <property type="project" value="UniProtKB-SubCell"/>
</dbReference>
<dbReference type="InterPro" id="IPR022382">
    <property type="entry name" value="Mycoplasma_peptidase_DUF31"/>
</dbReference>
<dbReference type="InterPro" id="IPR009003">
    <property type="entry name" value="Peptidase_S1_PA"/>
</dbReference>
<dbReference type="InterPro" id="IPR022381">
    <property type="entry name" value="Uncharacterised_MG067"/>
</dbReference>
<dbReference type="Pfam" id="PF01732">
    <property type="entry name" value="Mycop_pep_DUF31"/>
    <property type="match status" value="1"/>
</dbReference>
<dbReference type="PRINTS" id="PR00840">
    <property type="entry name" value="Y06768FAMILY"/>
</dbReference>
<dbReference type="SUPFAM" id="SSF50494">
    <property type="entry name" value="Trypsin-like serine proteases"/>
    <property type="match status" value="1"/>
</dbReference>
<dbReference type="PROSITE" id="PS51257">
    <property type="entry name" value="PROKAR_LIPOPROTEIN"/>
    <property type="match status" value="1"/>
</dbReference>
<gene>
    <name type="ordered locus">MG395</name>
</gene>
<sequence>MLKIDMWFKLKSLGFSLISLQALLASCSAVSPVPVPIEEKNDSTTDNNATPFKDEQSDQGTEVNQQPKVEQKVYNRNFKFNTSFIPEESDIYRKGYDLTFTLNFTSFSNDSYGTGWLIDWKGDENTTQKQGSFFAYIATNLHVADGLRNIGDHWPYSKTDDQREFNEYESTVYFSIGKYTNKTDITKLYQEEKLEQRKVNDSLLSIQTSNIPKTAYTATNFLKGVNSIKPVYADFAVIELELNLENLRDWQIFNEFIKPAINTYKSLGDSTNIFETKDLEQHWNHSHYLLGYPVLERGYDQNRLLEQKEEFARTHNFNQKSQLWSKNTYLVSTAKEIPVITKNARKDGQIGSEIFSKKTQDSHVDKVIKHEKGIVTFQNFKNFKLKYHDKEYQQYGYGLMLDDTNLPGGSSGSAIFNNNQKINSIYFGVLEVYKNSKTHKDNIGMSQLLRTSKRESEKNKTRTTNNRDKFQHYDLIFGDSNTKSFYAQFAKKHNTHLYDQIKSSEKEEFKYVDKNNQKTPFLLR</sequence>
<evidence type="ECO:0000255" key="1">
    <source>
        <dbReference type="PROSITE-ProRule" id="PRU00303"/>
    </source>
</evidence>
<evidence type="ECO:0000256" key="2">
    <source>
        <dbReference type="SAM" id="MobiDB-lite"/>
    </source>
</evidence>
<evidence type="ECO:0000305" key="3"/>
<accession>P47635</accession>
<protein>
    <recommendedName>
        <fullName>Uncharacterized lipoprotein MG395</fullName>
    </recommendedName>
</protein>
<organism>
    <name type="scientific">Mycoplasma genitalium (strain ATCC 33530 / DSM 19775 / NCTC 10195 / G37)</name>
    <name type="common">Mycoplasmoides genitalium</name>
    <dbReference type="NCBI Taxonomy" id="243273"/>
    <lineage>
        <taxon>Bacteria</taxon>
        <taxon>Bacillati</taxon>
        <taxon>Mycoplasmatota</taxon>
        <taxon>Mycoplasmoidales</taxon>
        <taxon>Mycoplasmoidaceae</taxon>
        <taxon>Mycoplasmoides</taxon>
    </lineage>
</organism>
<feature type="signal peptide" evidence="1">
    <location>
        <begin position="1"/>
        <end position="26"/>
    </location>
</feature>
<feature type="chain" id="PRO_0000018737" description="Uncharacterized lipoprotein MG395">
    <location>
        <begin position="27"/>
        <end position="524"/>
    </location>
</feature>
<feature type="region of interest" description="Disordered" evidence="2">
    <location>
        <begin position="37"/>
        <end position="68"/>
    </location>
</feature>
<feature type="compositionally biased region" description="Polar residues" evidence="2">
    <location>
        <begin position="58"/>
        <end position="68"/>
    </location>
</feature>
<feature type="lipid moiety-binding region" description="N-palmitoyl cysteine" evidence="1">
    <location>
        <position position="27"/>
    </location>
</feature>
<feature type="lipid moiety-binding region" description="S-diacylglycerol cysteine" evidence="1">
    <location>
        <position position="27"/>
    </location>
</feature>
<comment type="subcellular location">
    <subcellularLocation>
        <location evidence="1">Cell membrane</location>
        <topology evidence="1">Lipid-anchor</topology>
    </subcellularLocation>
</comment>
<comment type="similarity">
    <text evidence="3">Belongs to the MG067/MG068/MG395 family.</text>
</comment>
<proteinExistence type="inferred from homology"/>
<keyword id="KW-1003">Cell membrane</keyword>
<keyword id="KW-0449">Lipoprotein</keyword>
<keyword id="KW-0472">Membrane</keyword>
<keyword id="KW-0564">Palmitate</keyword>
<keyword id="KW-1185">Reference proteome</keyword>
<keyword id="KW-0732">Signal</keyword>
<name>Y395_MYCGE</name>